<name>LNK3_ARATH</name>
<accession>Q9LHH5</accession>
<dbReference type="EMBL" id="AP002047">
    <property type="protein sequence ID" value="BAB03140.1"/>
    <property type="molecule type" value="Genomic_DNA"/>
</dbReference>
<dbReference type="EMBL" id="AC069472">
    <property type="protein sequence ID" value="AAG51066.1"/>
    <property type="molecule type" value="Genomic_DNA"/>
</dbReference>
<dbReference type="EMBL" id="AC069474">
    <property type="protein sequence ID" value="AAG51013.1"/>
    <property type="molecule type" value="Genomic_DNA"/>
</dbReference>
<dbReference type="EMBL" id="CP002686">
    <property type="protein sequence ID" value="AEE75183.1"/>
    <property type="molecule type" value="Genomic_DNA"/>
</dbReference>
<dbReference type="EMBL" id="CP002686">
    <property type="protein sequence ID" value="ANM64652.1"/>
    <property type="molecule type" value="Genomic_DNA"/>
</dbReference>
<dbReference type="EMBL" id="AF360337">
    <property type="protein sequence ID" value="AAK28634.1"/>
    <property type="molecule type" value="mRNA"/>
</dbReference>
<dbReference type="EMBL" id="AY051074">
    <property type="protein sequence ID" value="AAK93751.1"/>
    <property type="molecule type" value="mRNA"/>
</dbReference>
<dbReference type="RefSeq" id="NP_001326665.1">
    <property type="nucleotide sequence ID" value="NM_001337987.1"/>
</dbReference>
<dbReference type="RefSeq" id="NP_566419.1">
    <property type="nucleotide sequence ID" value="NM_112067.4"/>
</dbReference>
<dbReference type="FunCoup" id="Q9LHH5">
    <property type="interactions" value="53"/>
</dbReference>
<dbReference type="STRING" id="3702.Q9LHH5"/>
<dbReference type="iPTMnet" id="Q9LHH5"/>
<dbReference type="PaxDb" id="3702-AT3G12320.1"/>
<dbReference type="ProteomicsDB" id="238476"/>
<dbReference type="EnsemblPlants" id="AT3G12320.1">
    <property type="protein sequence ID" value="AT3G12320.1"/>
    <property type="gene ID" value="AT3G12320"/>
</dbReference>
<dbReference type="EnsemblPlants" id="AT3G12320.3">
    <property type="protein sequence ID" value="AT3G12320.3"/>
    <property type="gene ID" value="AT3G12320"/>
</dbReference>
<dbReference type="GeneID" id="820411"/>
<dbReference type="Gramene" id="AT3G12320.1">
    <property type="protein sequence ID" value="AT3G12320.1"/>
    <property type="gene ID" value="AT3G12320"/>
</dbReference>
<dbReference type="Gramene" id="AT3G12320.3">
    <property type="protein sequence ID" value="AT3G12320.3"/>
    <property type="gene ID" value="AT3G12320"/>
</dbReference>
<dbReference type="KEGG" id="ath:AT3G12320"/>
<dbReference type="Araport" id="AT3G12320"/>
<dbReference type="TAIR" id="AT3G12320">
    <property type="gene designation" value="LNK3"/>
</dbReference>
<dbReference type="eggNOG" id="ENOG502R7JN">
    <property type="taxonomic scope" value="Eukaryota"/>
</dbReference>
<dbReference type="HOGENOM" id="CLU_954267_0_0_1"/>
<dbReference type="InParanoid" id="Q9LHH5"/>
<dbReference type="OMA" id="YRSDGMW"/>
<dbReference type="OrthoDB" id="1939712at2759"/>
<dbReference type="PhylomeDB" id="Q9LHH5"/>
<dbReference type="PRO" id="PR:Q9LHH5"/>
<dbReference type="Proteomes" id="UP000006548">
    <property type="component" value="Chromosome 3"/>
</dbReference>
<dbReference type="ExpressionAtlas" id="Q9LHH5">
    <property type="expression patterns" value="baseline and differential"/>
</dbReference>
<dbReference type="GO" id="GO:0007623">
    <property type="term" value="P:circadian rhythm"/>
    <property type="evidence" value="ECO:0000270"/>
    <property type="project" value="TAIR"/>
</dbReference>
<dbReference type="GO" id="GO:0006355">
    <property type="term" value="P:regulation of DNA-templated transcription"/>
    <property type="evidence" value="ECO:0007669"/>
    <property type="project" value="InterPro"/>
</dbReference>
<dbReference type="InterPro" id="IPR039928">
    <property type="entry name" value="LNK"/>
</dbReference>
<dbReference type="PANTHER" id="PTHR33334">
    <property type="entry name" value="PROTEIN LNK1"/>
    <property type="match status" value="1"/>
</dbReference>
<dbReference type="PANTHER" id="PTHR33334:SF10">
    <property type="entry name" value="PROTEIN LNK4"/>
    <property type="match status" value="1"/>
</dbReference>
<comment type="function">
    <text evidence="1">Probable transcriptional coactivator.</text>
</comment>
<comment type="subunit">
    <text evidence="4">Interacts with REV8.</text>
</comment>
<comment type="induction">
    <text evidence="2">Repressed by members of the TOC1/PRR1 family of clock genes.</text>
</comment>
<comment type="disruption phenotype">
    <text evidence="3">No effect on circadian clock.</text>
</comment>
<keyword id="KW-0010">Activator</keyword>
<keyword id="KW-1185">Reference proteome</keyword>
<keyword id="KW-0804">Transcription</keyword>
<keyword id="KW-0805">Transcription regulation</keyword>
<organism evidence="9">
    <name type="scientific">Arabidopsis thaliana</name>
    <name type="common">Mouse-ear cress</name>
    <dbReference type="NCBI Taxonomy" id="3702"/>
    <lineage>
        <taxon>Eukaryota</taxon>
        <taxon>Viridiplantae</taxon>
        <taxon>Streptophyta</taxon>
        <taxon>Embryophyta</taxon>
        <taxon>Tracheophyta</taxon>
        <taxon>Spermatophyta</taxon>
        <taxon>Magnoliopsida</taxon>
        <taxon>eudicotyledons</taxon>
        <taxon>Gunneridae</taxon>
        <taxon>Pentapetalae</taxon>
        <taxon>rosids</taxon>
        <taxon>malvids</taxon>
        <taxon>Brassicales</taxon>
        <taxon>Brassicaceae</taxon>
        <taxon>Camelineae</taxon>
        <taxon>Arabidopsis</taxon>
    </lineage>
</organism>
<gene>
    <name evidence="5" type="primary">LNK3</name>
    <name evidence="6" type="ordered locus">At3g12320</name>
    <name evidence="8" type="ORF">F28J15.9</name>
    <name evidence="7" type="ORF">T2E22.34</name>
</gene>
<reference key="1">
    <citation type="journal article" date="2000" name="DNA Res.">
        <title>Structural analysis of Arabidopsis thaliana chromosome 3. II. Sequence features of the 4,251,695 bp regions covered by 90 P1, TAC and BAC clones.</title>
        <authorList>
            <person name="Kaneko T."/>
            <person name="Katoh T."/>
            <person name="Sato S."/>
            <person name="Nakamura Y."/>
            <person name="Asamizu E."/>
            <person name="Tabata S."/>
        </authorList>
    </citation>
    <scope>NUCLEOTIDE SEQUENCE [LARGE SCALE GENOMIC DNA]</scope>
    <source>
        <strain>cv. Columbia</strain>
    </source>
</reference>
<reference key="2">
    <citation type="journal article" date="2000" name="Nature">
        <title>Sequence and analysis of chromosome 3 of the plant Arabidopsis thaliana.</title>
        <authorList>
            <person name="Salanoubat M."/>
            <person name="Lemcke K."/>
            <person name="Rieger M."/>
            <person name="Ansorge W."/>
            <person name="Unseld M."/>
            <person name="Fartmann B."/>
            <person name="Valle G."/>
            <person name="Bloecker H."/>
            <person name="Perez-Alonso M."/>
            <person name="Obermaier B."/>
            <person name="Delseny M."/>
            <person name="Boutry M."/>
            <person name="Grivell L.A."/>
            <person name="Mache R."/>
            <person name="Puigdomenech P."/>
            <person name="De Simone V."/>
            <person name="Choisne N."/>
            <person name="Artiguenave F."/>
            <person name="Robert C."/>
            <person name="Brottier P."/>
            <person name="Wincker P."/>
            <person name="Cattolico L."/>
            <person name="Weissenbach J."/>
            <person name="Saurin W."/>
            <person name="Quetier F."/>
            <person name="Schaefer M."/>
            <person name="Mueller-Auer S."/>
            <person name="Gabel C."/>
            <person name="Fuchs M."/>
            <person name="Benes V."/>
            <person name="Wurmbach E."/>
            <person name="Drzonek H."/>
            <person name="Erfle H."/>
            <person name="Jordan N."/>
            <person name="Bangert S."/>
            <person name="Wiedelmann R."/>
            <person name="Kranz H."/>
            <person name="Voss H."/>
            <person name="Holland R."/>
            <person name="Brandt P."/>
            <person name="Nyakatura G."/>
            <person name="Vezzi A."/>
            <person name="D'Angelo M."/>
            <person name="Pallavicini A."/>
            <person name="Toppo S."/>
            <person name="Simionati B."/>
            <person name="Conrad A."/>
            <person name="Hornischer K."/>
            <person name="Kauer G."/>
            <person name="Loehnert T.-H."/>
            <person name="Nordsiek G."/>
            <person name="Reichelt J."/>
            <person name="Scharfe M."/>
            <person name="Schoen O."/>
            <person name="Bargues M."/>
            <person name="Terol J."/>
            <person name="Climent J."/>
            <person name="Navarro P."/>
            <person name="Collado C."/>
            <person name="Perez-Perez A."/>
            <person name="Ottenwaelder B."/>
            <person name="Duchemin D."/>
            <person name="Cooke R."/>
            <person name="Laudie M."/>
            <person name="Berger-Llauro C."/>
            <person name="Purnelle B."/>
            <person name="Masuy D."/>
            <person name="de Haan M."/>
            <person name="Maarse A.C."/>
            <person name="Alcaraz J.-P."/>
            <person name="Cottet A."/>
            <person name="Casacuberta E."/>
            <person name="Monfort A."/>
            <person name="Argiriou A."/>
            <person name="Flores M."/>
            <person name="Liguori R."/>
            <person name="Vitale D."/>
            <person name="Mannhaupt G."/>
            <person name="Haase D."/>
            <person name="Schoof H."/>
            <person name="Rudd S."/>
            <person name="Zaccaria P."/>
            <person name="Mewes H.-W."/>
            <person name="Mayer K.F.X."/>
            <person name="Kaul S."/>
            <person name="Town C.D."/>
            <person name="Koo H.L."/>
            <person name="Tallon L.J."/>
            <person name="Jenkins J."/>
            <person name="Rooney T."/>
            <person name="Rizzo M."/>
            <person name="Walts A."/>
            <person name="Utterback T."/>
            <person name="Fujii C.Y."/>
            <person name="Shea T.P."/>
            <person name="Creasy T.H."/>
            <person name="Haas B."/>
            <person name="Maiti R."/>
            <person name="Wu D."/>
            <person name="Peterson J."/>
            <person name="Van Aken S."/>
            <person name="Pai G."/>
            <person name="Militscher J."/>
            <person name="Sellers P."/>
            <person name="Gill J.E."/>
            <person name="Feldblyum T.V."/>
            <person name="Preuss D."/>
            <person name="Lin X."/>
            <person name="Nierman W.C."/>
            <person name="Salzberg S.L."/>
            <person name="White O."/>
            <person name="Venter J.C."/>
            <person name="Fraser C.M."/>
            <person name="Kaneko T."/>
            <person name="Nakamura Y."/>
            <person name="Sato S."/>
            <person name="Kato T."/>
            <person name="Asamizu E."/>
            <person name="Sasamoto S."/>
            <person name="Kimura T."/>
            <person name="Idesawa K."/>
            <person name="Kawashima K."/>
            <person name="Kishida Y."/>
            <person name="Kiyokawa C."/>
            <person name="Kohara M."/>
            <person name="Matsumoto M."/>
            <person name="Matsuno A."/>
            <person name="Muraki A."/>
            <person name="Nakayama S."/>
            <person name="Nakazaki N."/>
            <person name="Shinpo S."/>
            <person name="Takeuchi C."/>
            <person name="Wada T."/>
            <person name="Watanabe A."/>
            <person name="Yamada M."/>
            <person name="Yasuda M."/>
            <person name="Tabata S."/>
        </authorList>
    </citation>
    <scope>NUCLEOTIDE SEQUENCE [LARGE SCALE GENOMIC DNA]</scope>
    <source>
        <strain>cv. Columbia</strain>
    </source>
</reference>
<reference key="3">
    <citation type="journal article" date="2017" name="Plant J.">
        <title>Araport11: a complete reannotation of the Arabidopsis thaliana reference genome.</title>
        <authorList>
            <person name="Cheng C.Y."/>
            <person name="Krishnakumar V."/>
            <person name="Chan A.P."/>
            <person name="Thibaud-Nissen F."/>
            <person name="Schobel S."/>
            <person name="Town C.D."/>
        </authorList>
    </citation>
    <scope>GENOME REANNOTATION</scope>
    <source>
        <strain>cv. Columbia</strain>
    </source>
</reference>
<reference key="4">
    <citation type="journal article" date="2003" name="Science">
        <title>Empirical analysis of transcriptional activity in the Arabidopsis genome.</title>
        <authorList>
            <person name="Yamada K."/>
            <person name="Lim J."/>
            <person name="Dale J.M."/>
            <person name="Chen H."/>
            <person name="Shinn P."/>
            <person name="Palm C.J."/>
            <person name="Southwick A.M."/>
            <person name="Wu H.C."/>
            <person name="Kim C.J."/>
            <person name="Nguyen M."/>
            <person name="Pham P.K."/>
            <person name="Cheuk R.F."/>
            <person name="Karlin-Newmann G."/>
            <person name="Liu S.X."/>
            <person name="Lam B."/>
            <person name="Sakano H."/>
            <person name="Wu T."/>
            <person name="Yu G."/>
            <person name="Miranda M."/>
            <person name="Quach H.L."/>
            <person name="Tripp M."/>
            <person name="Chang C.H."/>
            <person name="Lee J.M."/>
            <person name="Toriumi M.J."/>
            <person name="Chan M.M."/>
            <person name="Tang C.C."/>
            <person name="Onodera C.S."/>
            <person name="Deng J.M."/>
            <person name="Akiyama K."/>
            <person name="Ansari Y."/>
            <person name="Arakawa T."/>
            <person name="Banh J."/>
            <person name="Banno F."/>
            <person name="Bowser L."/>
            <person name="Brooks S.Y."/>
            <person name="Carninci P."/>
            <person name="Chao Q."/>
            <person name="Choy N."/>
            <person name="Enju A."/>
            <person name="Goldsmith A.D."/>
            <person name="Gurjal M."/>
            <person name="Hansen N.F."/>
            <person name="Hayashizaki Y."/>
            <person name="Johnson-Hopson C."/>
            <person name="Hsuan V.W."/>
            <person name="Iida K."/>
            <person name="Karnes M."/>
            <person name="Khan S."/>
            <person name="Koesema E."/>
            <person name="Ishida J."/>
            <person name="Jiang P.X."/>
            <person name="Jones T."/>
            <person name="Kawai J."/>
            <person name="Kamiya A."/>
            <person name="Meyers C."/>
            <person name="Nakajima M."/>
            <person name="Narusaka M."/>
            <person name="Seki M."/>
            <person name="Sakurai T."/>
            <person name="Satou M."/>
            <person name="Tamse R."/>
            <person name="Vaysberg M."/>
            <person name="Wallender E.K."/>
            <person name="Wong C."/>
            <person name="Yamamura Y."/>
            <person name="Yuan S."/>
            <person name="Shinozaki K."/>
            <person name="Davis R.W."/>
            <person name="Theologis A."/>
            <person name="Ecker J.R."/>
        </authorList>
    </citation>
    <scope>NUCLEOTIDE SEQUENCE [LARGE SCALE MRNA]</scope>
    <source>
        <strain>cv. Columbia</strain>
    </source>
</reference>
<reference key="5">
    <citation type="journal article" date="2013" name="Proc. Natl. Acad. Sci. U.S.A.">
        <title>LNK genes integrate light and clock signaling networks at the core of the Arabidopsis oscillator.</title>
        <authorList>
            <person name="Rugnone M.L."/>
            <person name="Faigon Soverna A."/>
            <person name="Sanchez S.E."/>
            <person name="Schlaen R.G."/>
            <person name="Hernando C.E."/>
            <person name="Seymour D.K."/>
            <person name="Mancini E."/>
            <person name="Chernomoretz A."/>
            <person name="Weigel D."/>
            <person name="Mas P."/>
            <person name="Yanovsky M.J."/>
        </authorList>
    </citation>
    <scope>INDUCTION</scope>
    <scope>GENE FAMILY</scope>
    <scope>NOMENCLATURE</scope>
</reference>
<reference key="6">
    <citation type="journal article" date="2014" name="Plant Cell">
        <title>LNK1 and LNK2 are transcriptional coactivators in the Arabidopsis circadian oscillator.</title>
        <authorList>
            <person name="Xie Q."/>
            <person name="Wang P."/>
            <person name="Liu X."/>
            <person name="Yuan L."/>
            <person name="Wang L."/>
            <person name="Zhang C."/>
            <person name="Li Y."/>
            <person name="Xing H."/>
            <person name="Zhi L."/>
            <person name="Yue Z."/>
            <person name="Zhao C."/>
            <person name="McClung C.R."/>
            <person name="Xu X."/>
        </authorList>
    </citation>
    <scope>DISRUPTION PHENOTYPE</scope>
</reference>
<reference key="7">
    <citation type="journal article" date="2015" name="Proc. Natl. Acad. Sci. U.S.A.">
        <title>Time-dependent sequestration of RVE8 by LNK proteins shapes the diurnal oscillation of anthocyanin biosynthesis.</title>
        <authorList>
            <person name="Perez-Garcia P."/>
            <person name="Ma Y."/>
            <person name="Yanovsky M.J."/>
            <person name="Mas P."/>
        </authorList>
    </citation>
    <scope>INTERACTION WITH RVE8</scope>
</reference>
<feature type="chain" id="PRO_0000436033" description="Protein LNK3">
    <location>
        <begin position="1"/>
        <end position="269"/>
    </location>
</feature>
<proteinExistence type="evidence at protein level"/>
<sequence length="269" mass="30554">MDCYAEELVVPNYQESSSETYPSTGMWGGWSMSSPEAAEKCFDYDGFNGEGMMYSQMSMRTSEEEEESKRSKAFYGASSLHDFEGIEQMDDMFLSSILEDVPEDDGDVHRATSSNNSVGSSSMYGGGREVPMFHCHDMSFKEEAPFTISDLSEENMLDSNYGDELSSEEFVLQDLQRASQKLTDETRKCFRDTFYRLARSSQDKSDSVSPNSEELLMQTSRYDYGDGNRFSREEEIESETNSIDRAVANLTFNKMESNISNFPLSERVQ</sequence>
<protein>
    <recommendedName>
        <fullName evidence="5">Protein LNK3</fullName>
    </recommendedName>
    <alternativeName>
        <fullName evidence="5">Night light-inducible and clock-regulated 3</fullName>
    </alternativeName>
</protein>
<evidence type="ECO:0000250" key="1">
    <source>
        <dbReference type="UniProtKB" id="A8MQN2"/>
    </source>
</evidence>
<evidence type="ECO:0000269" key="2">
    <source>
    </source>
</evidence>
<evidence type="ECO:0000269" key="3">
    <source>
    </source>
</evidence>
<evidence type="ECO:0000269" key="4">
    <source>
    </source>
</evidence>
<evidence type="ECO:0000303" key="5">
    <source>
    </source>
</evidence>
<evidence type="ECO:0000312" key="6">
    <source>
        <dbReference type="Araport" id="AT3G12320"/>
    </source>
</evidence>
<evidence type="ECO:0000312" key="7">
    <source>
        <dbReference type="EMBL" id="AAG51013.1"/>
    </source>
</evidence>
<evidence type="ECO:0000312" key="8">
    <source>
        <dbReference type="EMBL" id="AAG51066.1"/>
    </source>
</evidence>
<evidence type="ECO:0000312" key="9">
    <source>
        <dbReference type="EMBL" id="BAB03140.1"/>
    </source>
</evidence>